<protein>
    <recommendedName>
        <fullName evidence="1">5'-nucleotidase SurE</fullName>
        <ecNumber evidence="1">3.1.3.5</ecNumber>
    </recommendedName>
    <alternativeName>
        <fullName evidence="1">Nucleoside 5'-monophosphate phosphohydrolase</fullName>
    </alternativeName>
</protein>
<comment type="function">
    <text evidence="1">Nucleotidase that shows phosphatase activity on nucleoside 5'-monophosphates.</text>
</comment>
<comment type="catalytic activity">
    <reaction evidence="1">
        <text>a ribonucleoside 5'-phosphate + H2O = a ribonucleoside + phosphate</text>
        <dbReference type="Rhea" id="RHEA:12484"/>
        <dbReference type="ChEBI" id="CHEBI:15377"/>
        <dbReference type="ChEBI" id="CHEBI:18254"/>
        <dbReference type="ChEBI" id="CHEBI:43474"/>
        <dbReference type="ChEBI" id="CHEBI:58043"/>
        <dbReference type="EC" id="3.1.3.5"/>
    </reaction>
</comment>
<comment type="cofactor">
    <cofactor evidence="1">
        <name>a divalent metal cation</name>
        <dbReference type="ChEBI" id="CHEBI:60240"/>
    </cofactor>
    <text evidence="1">Binds 1 divalent metal cation per subunit.</text>
</comment>
<comment type="subcellular location">
    <subcellularLocation>
        <location evidence="1">Cytoplasm</location>
    </subcellularLocation>
</comment>
<comment type="similarity">
    <text evidence="1">Belongs to the SurE nucleotidase family.</text>
</comment>
<gene>
    <name evidence="1" type="primary">surE</name>
    <name type="ordered locus">Patl_3860</name>
</gene>
<dbReference type="EC" id="3.1.3.5" evidence="1"/>
<dbReference type="EMBL" id="CP000388">
    <property type="protein sequence ID" value="ABG42360.1"/>
    <property type="molecule type" value="Genomic_DNA"/>
</dbReference>
<dbReference type="RefSeq" id="WP_011576568.1">
    <property type="nucleotide sequence ID" value="NC_008228.1"/>
</dbReference>
<dbReference type="SMR" id="Q15P28"/>
<dbReference type="STRING" id="342610.Patl_3860"/>
<dbReference type="KEGG" id="pat:Patl_3860"/>
<dbReference type="eggNOG" id="COG0496">
    <property type="taxonomic scope" value="Bacteria"/>
</dbReference>
<dbReference type="HOGENOM" id="CLU_045192_1_2_6"/>
<dbReference type="OrthoDB" id="9780815at2"/>
<dbReference type="Proteomes" id="UP000001981">
    <property type="component" value="Chromosome"/>
</dbReference>
<dbReference type="GO" id="GO:0005737">
    <property type="term" value="C:cytoplasm"/>
    <property type="evidence" value="ECO:0007669"/>
    <property type="project" value="UniProtKB-SubCell"/>
</dbReference>
<dbReference type="GO" id="GO:0008254">
    <property type="term" value="F:3'-nucleotidase activity"/>
    <property type="evidence" value="ECO:0007669"/>
    <property type="project" value="TreeGrafter"/>
</dbReference>
<dbReference type="GO" id="GO:0008253">
    <property type="term" value="F:5'-nucleotidase activity"/>
    <property type="evidence" value="ECO:0007669"/>
    <property type="project" value="UniProtKB-UniRule"/>
</dbReference>
<dbReference type="GO" id="GO:0004309">
    <property type="term" value="F:exopolyphosphatase activity"/>
    <property type="evidence" value="ECO:0007669"/>
    <property type="project" value="TreeGrafter"/>
</dbReference>
<dbReference type="GO" id="GO:0046872">
    <property type="term" value="F:metal ion binding"/>
    <property type="evidence" value="ECO:0007669"/>
    <property type="project" value="UniProtKB-UniRule"/>
</dbReference>
<dbReference type="GO" id="GO:0000166">
    <property type="term" value="F:nucleotide binding"/>
    <property type="evidence" value="ECO:0007669"/>
    <property type="project" value="UniProtKB-KW"/>
</dbReference>
<dbReference type="FunFam" id="3.40.1210.10:FF:000001">
    <property type="entry name" value="5'/3'-nucleotidase SurE"/>
    <property type="match status" value="1"/>
</dbReference>
<dbReference type="Gene3D" id="3.40.1210.10">
    <property type="entry name" value="Survival protein SurE-like phosphatase/nucleotidase"/>
    <property type="match status" value="1"/>
</dbReference>
<dbReference type="HAMAP" id="MF_00060">
    <property type="entry name" value="SurE"/>
    <property type="match status" value="1"/>
</dbReference>
<dbReference type="InterPro" id="IPR030048">
    <property type="entry name" value="SurE"/>
</dbReference>
<dbReference type="InterPro" id="IPR002828">
    <property type="entry name" value="SurE-like_Pase/nucleotidase"/>
</dbReference>
<dbReference type="InterPro" id="IPR036523">
    <property type="entry name" value="SurE-like_sf"/>
</dbReference>
<dbReference type="NCBIfam" id="NF001489">
    <property type="entry name" value="PRK00346.1-3"/>
    <property type="match status" value="1"/>
</dbReference>
<dbReference type="NCBIfam" id="NF001490">
    <property type="entry name" value="PRK00346.1-4"/>
    <property type="match status" value="1"/>
</dbReference>
<dbReference type="NCBIfam" id="TIGR00087">
    <property type="entry name" value="surE"/>
    <property type="match status" value="1"/>
</dbReference>
<dbReference type="PANTHER" id="PTHR30457">
    <property type="entry name" value="5'-NUCLEOTIDASE SURE"/>
    <property type="match status" value="1"/>
</dbReference>
<dbReference type="PANTHER" id="PTHR30457:SF12">
    <property type="entry name" value="5'_3'-NUCLEOTIDASE SURE"/>
    <property type="match status" value="1"/>
</dbReference>
<dbReference type="Pfam" id="PF01975">
    <property type="entry name" value="SurE"/>
    <property type="match status" value="1"/>
</dbReference>
<dbReference type="SUPFAM" id="SSF64167">
    <property type="entry name" value="SurE-like"/>
    <property type="match status" value="1"/>
</dbReference>
<feature type="chain" id="PRO_1000007766" description="5'-nucleotidase SurE">
    <location>
        <begin position="1"/>
        <end position="248"/>
    </location>
</feature>
<feature type="binding site" evidence="1">
    <location>
        <position position="8"/>
    </location>
    <ligand>
        <name>a divalent metal cation</name>
        <dbReference type="ChEBI" id="CHEBI:60240"/>
    </ligand>
</feature>
<feature type="binding site" evidence="1">
    <location>
        <position position="9"/>
    </location>
    <ligand>
        <name>a divalent metal cation</name>
        <dbReference type="ChEBI" id="CHEBI:60240"/>
    </ligand>
</feature>
<feature type="binding site" evidence="1">
    <location>
        <position position="39"/>
    </location>
    <ligand>
        <name>a divalent metal cation</name>
        <dbReference type="ChEBI" id="CHEBI:60240"/>
    </ligand>
</feature>
<feature type="binding site" evidence="1">
    <location>
        <position position="91"/>
    </location>
    <ligand>
        <name>a divalent metal cation</name>
        <dbReference type="ChEBI" id="CHEBI:60240"/>
    </ligand>
</feature>
<name>SURE_PSEA6</name>
<reference key="1">
    <citation type="submission" date="2006-06" db="EMBL/GenBank/DDBJ databases">
        <title>Complete sequence of Pseudoalteromonas atlantica T6c.</title>
        <authorList>
            <consortium name="US DOE Joint Genome Institute"/>
            <person name="Copeland A."/>
            <person name="Lucas S."/>
            <person name="Lapidus A."/>
            <person name="Barry K."/>
            <person name="Detter J.C."/>
            <person name="Glavina del Rio T."/>
            <person name="Hammon N."/>
            <person name="Israni S."/>
            <person name="Dalin E."/>
            <person name="Tice H."/>
            <person name="Pitluck S."/>
            <person name="Saunders E."/>
            <person name="Brettin T."/>
            <person name="Bruce D."/>
            <person name="Han C."/>
            <person name="Tapia R."/>
            <person name="Gilna P."/>
            <person name="Schmutz J."/>
            <person name="Larimer F."/>
            <person name="Land M."/>
            <person name="Hauser L."/>
            <person name="Kyrpides N."/>
            <person name="Kim E."/>
            <person name="Karls A.C."/>
            <person name="Bartlett D."/>
            <person name="Higgins B.P."/>
            <person name="Richardson P."/>
        </authorList>
    </citation>
    <scope>NUCLEOTIDE SEQUENCE [LARGE SCALE GENOMIC DNA]</scope>
    <source>
        <strain>T6c / ATCC BAA-1087</strain>
    </source>
</reference>
<organism>
    <name type="scientific">Pseudoalteromonas atlantica (strain T6c / ATCC BAA-1087)</name>
    <dbReference type="NCBI Taxonomy" id="3042615"/>
    <lineage>
        <taxon>Bacteria</taxon>
        <taxon>Pseudomonadati</taxon>
        <taxon>Pseudomonadota</taxon>
        <taxon>Gammaproteobacteria</taxon>
        <taxon>Alteromonadales</taxon>
        <taxon>Alteromonadaceae</taxon>
        <taxon>Paraglaciecola</taxon>
    </lineage>
</organism>
<proteinExistence type="inferred from homology"/>
<accession>Q15P28</accession>
<keyword id="KW-0963">Cytoplasm</keyword>
<keyword id="KW-0378">Hydrolase</keyword>
<keyword id="KW-0479">Metal-binding</keyword>
<keyword id="KW-0547">Nucleotide-binding</keyword>
<evidence type="ECO:0000255" key="1">
    <source>
        <dbReference type="HAMAP-Rule" id="MF_00060"/>
    </source>
</evidence>
<sequence length="248" mass="27041">MRILLSNDDGVFAQGLAELYKELKEDHEITVIAPDRNCSGASNALSLQQPLRMEQMQSGFYAVNGTPSDCVHVGVNSFLQQDPELVISGINHGANLGDDVIYSGTVAAATEGRYMGLPAIAVSLCAHTSDNFVSAAKFVRRIVTHLQAHPLPADQILNVNIPDLPYGEIKGIKVTRQGRRHRAKTMIKDTDPRGKTIFWYGPVGEEQDAGPGTDFHAISEGFCSVTPLSVDMTAHQSLEDVRQWITKI</sequence>